<dbReference type="EMBL" id="CF673576">
    <property type="status" value="NOT_ANNOTATED_CDS"/>
    <property type="molecule type" value="mRNA"/>
</dbReference>
<dbReference type="RefSeq" id="XP_065684300.1">
    <property type="nucleotide sequence ID" value="XM_065828228.1"/>
</dbReference>
<dbReference type="SMR" id="P0DQV6"/>
<dbReference type="GeneID" id="136096684"/>
<dbReference type="Proteomes" id="UP000694840">
    <property type="component" value="Unplaced"/>
</dbReference>
<dbReference type="GO" id="GO:0005576">
    <property type="term" value="C:extracellular region"/>
    <property type="evidence" value="ECO:0007669"/>
    <property type="project" value="UniProtKB-SubCell"/>
</dbReference>
<dbReference type="GO" id="GO:0042151">
    <property type="term" value="C:nematocyst"/>
    <property type="evidence" value="ECO:0007669"/>
    <property type="project" value="UniProtKB-SubCell"/>
</dbReference>
<dbReference type="GO" id="GO:0044218">
    <property type="term" value="C:other organism cell membrane"/>
    <property type="evidence" value="ECO:0007669"/>
    <property type="project" value="UniProtKB-KW"/>
</dbReference>
<dbReference type="GO" id="GO:0046930">
    <property type="term" value="C:pore complex"/>
    <property type="evidence" value="ECO:0007669"/>
    <property type="project" value="InterPro"/>
</dbReference>
<dbReference type="GO" id="GO:0015267">
    <property type="term" value="F:channel activity"/>
    <property type="evidence" value="ECO:0007669"/>
    <property type="project" value="InterPro"/>
</dbReference>
<dbReference type="GO" id="GO:0090729">
    <property type="term" value="F:toxin activity"/>
    <property type="evidence" value="ECO:0007669"/>
    <property type="project" value="UniProtKB-KW"/>
</dbReference>
<dbReference type="GO" id="GO:0051715">
    <property type="term" value="P:cytolysis in another organism"/>
    <property type="evidence" value="ECO:0007669"/>
    <property type="project" value="InterPro"/>
</dbReference>
<dbReference type="GO" id="GO:0006812">
    <property type="term" value="P:monoatomic cation transport"/>
    <property type="evidence" value="ECO:0007669"/>
    <property type="project" value="InterPro"/>
</dbReference>
<dbReference type="GO" id="GO:0046931">
    <property type="term" value="P:pore complex assembly"/>
    <property type="evidence" value="ECO:0007669"/>
    <property type="project" value="InterPro"/>
</dbReference>
<dbReference type="Gene3D" id="2.60.270.20">
    <property type="entry name" value="Cytolysin/lectin"/>
    <property type="match status" value="1"/>
</dbReference>
<dbReference type="InterPro" id="IPR050677">
    <property type="entry name" value="Actinoporin_PFT"/>
</dbReference>
<dbReference type="InterPro" id="IPR009104">
    <property type="entry name" value="Anemon_actinoporin-like"/>
</dbReference>
<dbReference type="InterPro" id="IPR015926">
    <property type="entry name" value="Cytolysin/lectin"/>
</dbReference>
<dbReference type="PANTHER" id="PTHR40388">
    <property type="entry name" value="BRYOPORIN"/>
    <property type="match status" value="1"/>
</dbReference>
<dbReference type="PANTHER" id="PTHR40388:SF1">
    <property type="entry name" value="BRYOPORIN"/>
    <property type="match status" value="1"/>
</dbReference>
<dbReference type="Pfam" id="PF06369">
    <property type="entry name" value="Anemone_cytotox"/>
    <property type="match status" value="1"/>
</dbReference>
<dbReference type="SUPFAM" id="SSF63724">
    <property type="entry name" value="Cytolysin/lectin"/>
    <property type="match status" value="1"/>
</dbReference>
<proteinExistence type="evidence at transcript level"/>
<reference key="1">
    <citation type="submission" date="2011-10" db="EMBL/GenBank/DDBJ databases">
        <title>WashU Hydra EST Project.</title>
        <authorList>
            <person name="Bode H."/>
            <person name="Blumberg B."/>
            <person name="Steele R."/>
            <person name="Wigge P."/>
            <person name="Gee L."/>
            <person name="Nguyen Q."/>
            <person name="Martinez D."/>
            <person name="Kibler D."/>
            <person name="Hampson S."/>
            <person name="Clifton S."/>
            <person name="Pape D."/>
            <person name="Marra M."/>
            <person name="Hillier L."/>
            <person name="Martin J."/>
            <person name="Wylie T."/>
            <person name="Dante M."/>
            <person name="Theising B."/>
            <person name="Bowers Y."/>
            <person name="Gibbons M."/>
            <person name="Ritter E."/>
            <person name="Bennett J."/>
            <person name="Ronko I."/>
            <person name="Tsagareishvili R."/>
            <person name="Maguire L."/>
            <person name="Kennedy S."/>
            <person name="Waterston R."/>
            <person name="Wilson R."/>
        </authorList>
    </citation>
    <scope>NUCLEOTIDE SEQUENCE [MRNA] OF 1-166</scope>
</reference>
<reference key="2">
    <citation type="journal article" date="2019" name="Toxicon">
        <title>Expansion of Hydra actinoporin-like toxin (HALT) gene family: expression divergence and functional convergence evolved through gene duplication.</title>
        <authorList>
            <person name="Yap W.Y."/>
            <person name="Tan K.J.S.X."/>
            <person name="Hwang J.S."/>
        </authorList>
    </citation>
    <scope>NUCLEOTIDE SEQUENCE [MRNA] OF 18-302</scope>
    <scope>FUNCTION</scope>
    <scope>SUBCELLULAR LOCATION</scope>
    <scope>DEVELOPMENTAL STAGE</scope>
    <scope>RECOMBINANT EXPRESSION</scope>
</reference>
<reference key="3">
    <citation type="journal article" date="2014" name="Toxicon">
        <title>Hydra actinoporin-like toxin-1, an unusual hemolysin from the nematocyst venom of Hydra magnipapillata which belongs to an extended gene family.</title>
        <authorList>
            <person name="Glasser E."/>
            <person name="Rachamim T."/>
            <person name="Aharonovich D."/>
            <person name="Sher D."/>
        </authorList>
    </citation>
    <scope>NUCLEOTIDE SEQUENCE [GENOMIC DNA] OF 121-302</scope>
</reference>
<evidence type="ECO:0000250" key="1">
    <source>
        <dbReference type="UniProtKB" id="A0A8B7DWS6"/>
    </source>
</evidence>
<evidence type="ECO:0000250" key="2">
    <source>
        <dbReference type="UniProtKB" id="B9W5G6"/>
    </source>
</evidence>
<evidence type="ECO:0000250" key="3">
    <source>
        <dbReference type="UniProtKB" id="P07845"/>
    </source>
</evidence>
<evidence type="ECO:0000250" key="4">
    <source>
        <dbReference type="UniProtKB" id="P61914"/>
    </source>
</evidence>
<evidence type="ECO:0000255" key="5"/>
<evidence type="ECO:0000256" key="6">
    <source>
        <dbReference type="SAM" id="MobiDB-lite"/>
    </source>
</evidence>
<evidence type="ECO:0000269" key="7">
    <source>
    </source>
</evidence>
<evidence type="ECO:0000303" key="8">
    <source>
    </source>
</evidence>
<evidence type="ECO:0000303" key="9">
    <source>
    </source>
</evidence>
<evidence type="ECO:0000305" key="10"/>
<organism>
    <name type="scientific">Hydra vulgaris</name>
    <name type="common">Hydra</name>
    <name type="synonym">Hydra attenuata</name>
    <dbReference type="NCBI Taxonomy" id="6087"/>
    <lineage>
        <taxon>Eukaryota</taxon>
        <taxon>Metazoa</taxon>
        <taxon>Cnidaria</taxon>
        <taxon>Hydrozoa</taxon>
        <taxon>Hydroidolina</taxon>
        <taxon>Anthoathecata</taxon>
        <taxon>Aplanulata</taxon>
        <taxon>Hydridae</taxon>
        <taxon>Hydra</taxon>
    </lineage>
</organism>
<protein>
    <recommendedName>
        <fullName evidence="8 9">Hydra actinoporin-like toxin 4</fullName>
        <shortName evidence="8 9">HALT-4</shortName>
    </recommendedName>
    <alternativeName>
        <fullName evidence="8">Alpha-pore-forming toxin</fullName>
        <shortName evidence="8">alpha-PFT</shortName>
    </alternativeName>
    <alternativeName>
        <fullName evidence="10">DELTA-hydritoxin-Hma1d</fullName>
        <shortName evidence="10">DELTA-HYTX-Hma1d</shortName>
    </alternativeName>
</protein>
<name>ACTL4_HYDVU</name>
<feature type="signal peptide" evidence="5">
    <location>
        <begin position="1"/>
        <end position="17"/>
    </location>
</feature>
<feature type="chain" id="PRO_0000456794" description="Hydra actinoporin-like toxin 4">
    <location>
        <begin position="18"/>
        <end position="302"/>
    </location>
</feature>
<feature type="region of interest" description="Disordered" evidence="6">
    <location>
        <begin position="22"/>
        <end position="93"/>
    </location>
</feature>
<feature type="short sequence motif" description="Cell attachment site" evidence="3">
    <location>
        <begin position="274"/>
        <end position="276"/>
    </location>
</feature>
<feature type="compositionally biased region" description="Low complexity" evidence="6">
    <location>
        <begin position="60"/>
        <end position="75"/>
    </location>
</feature>
<feature type="compositionally biased region" description="Pro residues" evidence="6">
    <location>
        <begin position="76"/>
        <end position="86"/>
    </location>
</feature>
<feature type="sequence conflict" description="In Ref. 3." evidence="10" ref="3">
    <location>
        <position position="211"/>
    </location>
</feature>
<comment type="function">
    <text evidence="1 2 7">Pore-forming protein that forms hydrophilic pores and causes cytolysis (PubMed:31513812). Compared to equinatoxin-2 (AC P61914), it reveals lower cytolysis activity (5-12-fold difference, tested on erythrocytes), a larger pore size (probably 2-3 nm) and different affinity to membrane lipids (100-fold lower affinity to sphingomyelin) (By similarity). Binds to sulfatides (PubMed:31513812). Shows cytolytic activity on HeLa cells, with a different potency than its paralogs (from most potent to less potent: HALT-4&gt;HALT-6~HALT-1&gt;HALT-3&gt;HALT-7&gt;HALT-2) (PubMed:31513812). This recombinant protein has the highest cytolytic activity compared to other rHALT proteins, probably due to its longer N-terminal sequence that may penetrate the lipid bilayer more effectively (PubMed:31513812). Pore formation is a multi-step process that involves specific recognition of membrane lipid by a protein aromatic residues rich region, firm binding to the membrane (mainly driven by hydrophobic interactions) accompanied by the transfer of the N-terminal region to the lipid-water interface and finally pore formation after oligomerization of monomers (By similarity). In vitro, binds to the folate receptor alpha (FOLR1), a GPI-anchored membrane protein that plays a major role in the uptake of folate/folic acid into cells via endocytosis, suggesting a possible involvement of this receptor in the mechanism of HALT-1-induced cell lysis (By similarity). In vivo, does not cause visible paralysis in larvae of the blowfly Sarcophaga faculata, the most common arthropod prey of Hydra (By similarity).</text>
</comment>
<comment type="subunit">
    <text evidence="1 2">Octamer or nonamer in membranes (By similarity). Monomer in the soluble state (By similarity). In vitro, interacts with folate receptor alpha (of target organism) (By similarity).</text>
</comment>
<comment type="subcellular location">
    <subcellularLocation>
        <location evidence="7">Nematocyst</location>
    </subcellularLocation>
    <subcellularLocation>
        <location evidence="2">Secreted</location>
    </subcellularLocation>
    <subcellularLocation>
        <location evidence="2">Target cell membrane</location>
    </subcellularLocation>
    <text evidence="7">Found in differentiating stenoteles (another type of nematocyst).</text>
</comment>
<comment type="developmental stage">
    <text evidence="7">Is expressed in differentiating and mature stenoteles (one type of nematocyst).</text>
</comment>
<comment type="domain">
    <text evidence="4">Composed of a long N-terminal alpha-helix and a core region rich in beta-sheet structures. Before the pore formation, the alpha-helix binds the lipid membrane, partitions into the lipid-water interface and stabilizes the monomeric molecule on the membrane. Finally, it traverses the bilayer, thus forming the transmembrane pore.</text>
</comment>
<comment type="similarity">
    <text evidence="10">Belongs to the actinoporin family. HALT subfamily.</text>
</comment>
<accession>P0DQV6</accession>
<sequence length="302" mass="32780">MLLFKLIVCFFFIFAIGANENKKDETSGENEPSENADVNSEASVVKEAFKKPASRKVNVKPPAAKPPAASKITKPQVPPQKKPPAPKQTTTKKPLLANIEGKIKGAANETTKYLTNLAKEMGKEAESALKEKAKEALTGLLDKADINGAFNAIASIWKNNENKPARYWKCAVENLSEETLVALGTTPYSGNVKTVLSDIPPQSTGVFVWESDSALTGAAGVVHYQLGDKILNIMASDPYDWTLYGAWANVRVSDNKETFDNLYSGKNGAQYPTKAGNWGIADGVKFFLTNNKEAEFQVIFSG</sequence>
<keyword id="KW-0204">Cytolysis</keyword>
<keyword id="KW-0472">Membrane</keyword>
<keyword id="KW-0166">Nematocyst</keyword>
<keyword id="KW-1185">Reference proteome</keyword>
<keyword id="KW-0964">Secreted</keyword>
<keyword id="KW-0732">Signal</keyword>
<keyword id="KW-1052">Target cell membrane</keyword>
<keyword id="KW-1053">Target membrane</keyword>
<keyword id="KW-0800">Toxin</keyword>
<keyword id="KW-0812">Transmembrane</keyword>